<reference key="1">
    <citation type="journal article" date="1991" name="Mol. Biochem. Parasitol.">
        <title>Molecular characterisation of a protective, 11-kDa excretory-secretory protein from the parasitic stages of Trichostrongylus colubriformis.</title>
        <authorList>
            <person name="Dopheide T.A."/>
            <person name="Tachejian M."/>
            <person name="Phillips C."/>
            <person name="Frenkel M.J."/>
            <person name="Wagland B.M."/>
            <person name="Ward C.W."/>
        </authorList>
    </citation>
    <scope>NUCLEOTIDE SEQUENCE [MRNA]</scope>
    <scope>PROTEIN SEQUENCE OF 52-63 AND 82-92</scope>
</reference>
<protein>
    <recommendedName>
        <fullName>11 kDa excretory-secretory protein</fullName>
    </recommendedName>
    <alternativeName>
        <fullName>TCADES4</fullName>
    </alternativeName>
</protein>
<keyword id="KW-0903">Direct protein sequencing</keyword>
<sequence length="92" mass="10914">MLYKKLRSQGNFRKNDSAYFKLENKRELKGDNLPVEEKVRQTIEKFKDDVSEIRRLADDSDFGCNGKETGGAMHIVCFFQKNYDWMKGQWQN</sequence>
<feature type="chain" id="PRO_0000087142" description="11 kDa excretory-secretory protein">
    <location>
        <begin position="1"/>
        <end position="92"/>
    </location>
</feature>
<dbReference type="EMBL" id="M38527">
    <property type="protein sequence ID" value="AAA30099.1"/>
    <property type="molecule type" value="mRNA"/>
</dbReference>
<dbReference type="SMR" id="P21937"/>
<accession>P21937</accession>
<proteinExistence type="evidence at protein level"/>
<organism>
    <name type="scientific">Trichostrongylus colubriformis</name>
    <name type="common">Black scour worm</name>
    <dbReference type="NCBI Taxonomy" id="6319"/>
    <lineage>
        <taxon>Eukaryota</taxon>
        <taxon>Metazoa</taxon>
        <taxon>Ecdysozoa</taxon>
        <taxon>Nematoda</taxon>
        <taxon>Chromadorea</taxon>
        <taxon>Rhabditida</taxon>
        <taxon>Rhabditina</taxon>
        <taxon>Rhabditomorpha</taxon>
        <taxon>Strongyloidea</taxon>
        <taxon>Trichostrongylidae</taxon>
        <taxon>Trichostrongylus</taxon>
    </lineage>
</organism>
<name>EXSE_TRICO</name>